<gene>
    <name evidence="21" type="primary">H2bc12</name>
    <name type="synonym">Hist1h2bk</name>
</gene>
<sequence length="126" mass="13920">MPEPAKSAPAPKKGSKKAVTKAQKKDGKKRKRSRKESYSVYVYKVLKQVHPDTGISSKAMGIMNSFVNDIFERIASEASRLAHYNKRSTITSREIQTAVRLLLPGELAKHAVSEGTKAVTKYTSAK</sequence>
<comment type="function">
    <text>Core component of nucleosome. Nucleosomes wrap and compact DNA into chromatin, limiting DNA accessibility to the cellular machineries which require DNA as a template. Histones thereby play a central role in transcription regulation, DNA repair, DNA replication and chromosomal stability. DNA accessibility is regulated via a complex set of post-translational modifications of histones, also called histone code, and nucleosome remodeling.</text>
</comment>
<comment type="subunit">
    <text>The nucleosome is a histone octamer containing two molecules each of H2A, H2B, H3 and H4 assembled in one H3-H4 heterotetramer and two H2A-H2B heterodimers. The octamer wraps approximately 147 bp of DNA.</text>
</comment>
<comment type="subcellular location">
    <subcellularLocation>
        <location>Nucleus</location>
    </subcellularLocation>
    <subcellularLocation>
        <location>Chromosome</location>
    </subcellularLocation>
</comment>
<comment type="PTM">
    <text evidence="3">Monoubiquitination at Lys-35 (H2BK34Ub) by the MSL1/MSL2 dimer is required for histone H3 'Lys-4' (H3K4me) and 'Lys-79' (H3K79me) methylation and transcription activation at specific gene loci, such as HOXA9 and MEIS1 loci. Similarly, monoubiquitination at Lys-121 (H2BK120Ub) by the RNF20/40 complex gives a specific tag for epigenetic transcriptional activation and is also prerequisite for histone H3 'Lys-4' and 'Lys-79' methylation. It also functions cooperatively with the FACT dimer to stimulate elongation by RNA polymerase II. H2BK120Ub also acts as a regulator of mRNA splicing: deubiquitination by USP49 is required for efficient cotranscriptional splicing of a large set of exons (By similarity).</text>
</comment>
<comment type="PTM">
    <text evidence="11 12 13 19">Phosphorylated on Ser-15 (H2BS14ph) by STK4/MST1 during apoptosis; which facilitates apoptotic chromatin condensation (PubMed:15197225, PubMed:16039583). Also phosphorylated on Ser-15 in response to DNA double strand breaks (DSBs), and in correlation with somatic hypermutation and immunoglobulin class-switch recombination (PubMed:15197225). Phosphorylation at Ser-37 (H2BS36ph) by AMPK in response to stress promotes transcription (PubMed:20647423, PubMed:32822587).</text>
</comment>
<comment type="PTM">
    <text evidence="5">GlcNAcylation at Ser-113 promotes monoubiquitination of Lys-121. It fluctuates in response to extracellular glucose, and associates with transcribed genes (By similarity).</text>
</comment>
<comment type="PTM">
    <text evidence="3 19">ADP-ribosylated by PARP1 or PARP2 on Ser-7 (H2BS6ADPr) in response to DNA damage (By similarity). H2BS6ADPr promotes recruitment of CHD1L (By similarity). Mono-ADP-ribosylated on Glu-3 (H2BE2ADPr) by PARP3 in response to single-strand breaks (By similarity). Poly ADP-ribosylation on Glu-36 (H2BE35ADPr) by PARP1 regulates adipogenesis: it inhibits phosphorylation at Ser-37 (H2BS36ph), thereby blocking expression of pro-adipogenetic genes (PubMed:32822587).</text>
</comment>
<comment type="PTM">
    <text evidence="14">Crotonylation (Kcr) is specifically present in male germ cells and marks testis-specific genes in post-meiotic cells, including X-linked genes that escape sex chromosome inactivation in haploid cells. Crotonylation marks active promoters and enhancers and confers resistance to transcriptional repressors. It is also associated with post-meiotically activated genes on autosomes.</text>
</comment>
<comment type="PTM">
    <text evidence="17">Hydroxybutyrylation of histones is induced by starvation.</text>
</comment>
<comment type="PTM">
    <text evidence="3">Lactylated in macrophages by EP300/P300 by using lactoyl-CoA directly derived from endogenous or exogenous lactate, leading to stimulates gene transcription.</text>
</comment>
<comment type="similarity">
    <text evidence="20">Belongs to the histone H2B family.</text>
</comment>
<name>H2B1K_MOUSE</name>
<reference key="1">
    <citation type="journal article" date="2002" name="Genomics">
        <title>The human and mouse replication-dependent histone genes.</title>
        <authorList>
            <person name="Marzluff W.F."/>
            <person name="Gongidi P."/>
            <person name="Woods K.R."/>
            <person name="Jin J."/>
            <person name="Maltais L.J."/>
        </authorList>
    </citation>
    <scope>NUCLEOTIDE SEQUENCE [GENOMIC DNA]</scope>
</reference>
<reference key="2">
    <citation type="journal article" date="2009" name="PLoS Biol.">
        <title>Lineage-specific biology revealed by a finished genome assembly of the mouse.</title>
        <authorList>
            <person name="Church D.M."/>
            <person name="Goodstadt L."/>
            <person name="Hillier L.W."/>
            <person name="Zody M.C."/>
            <person name="Goldstein S."/>
            <person name="She X."/>
            <person name="Bult C.J."/>
            <person name="Agarwala R."/>
            <person name="Cherry J.L."/>
            <person name="DiCuccio M."/>
            <person name="Hlavina W."/>
            <person name="Kapustin Y."/>
            <person name="Meric P."/>
            <person name="Maglott D."/>
            <person name="Birtle Z."/>
            <person name="Marques A.C."/>
            <person name="Graves T."/>
            <person name="Zhou S."/>
            <person name="Teague B."/>
            <person name="Potamousis K."/>
            <person name="Churas C."/>
            <person name="Place M."/>
            <person name="Herschleb J."/>
            <person name="Runnheim R."/>
            <person name="Forrest D."/>
            <person name="Amos-Landgraf J."/>
            <person name="Schwartz D.C."/>
            <person name="Cheng Z."/>
            <person name="Lindblad-Toh K."/>
            <person name="Eichler E.E."/>
            <person name="Ponting C.P."/>
        </authorList>
    </citation>
    <scope>NUCLEOTIDE SEQUENCE [LARGE SCALE GENOMIC DNA]</scope>
    <source>
        <strain>C57BL/6J</strain>
    </source>
</reference>
<reference key="3">
    <citation type="journal article" date="2004" name="J. Exp. Med.">
        <title>Phosphorylation of histone H2B at DNA double-strand breaks.</title>
        <authorList>
            <person name="Fernandez-Capetillo O."/>
            <person name="Allis C.D."/>
            <person name="Nussenzweig A."/>
        </authorList>
    </citation>
    <scope>PHOSPHORYLATION AT SER-15</scope>
</reference>
<reference key="4">
    <citation type="journal article" date="2005" name="Immunity">
        <title>Histone modifications associated with somatic hypermutation.</title>
        <authorList>
            <person name="Odegard V.H."/>
            <person name="Kim S.T."/>
            <person name="Anderson S.M."/>
            <person name="Shlomchik M.J."/>
            <person name="Schatz D.G."/>
        </authorList>
    </citation>
    <scope>PHOSPHORYLATION AT SER-15</scope>
</reference>
<reference key="5">
    <citation type="journal article" date="2010" name="Science">
        <title>Signaling kinase AMPK activates stress-promoted transcription via histone H2B phosphorylation.</title>
        <authorList>
            <person name="Bungard D."/>
            <person name="Fuerth B.J."/>
            <person name="Zeng P.Y."/>
            <person name="Faubert B."/>
            <person name="Maas N.L."/>
            <person name="Viollet B."/>
            <person name="Carling D."/>
            <person name="Thompson C.B."/>
            <person name="Jones R.G."/>
            <person name="Berger S.L."/>
        </authorList>
    </citation>
    <scope>PHOSPHORYLATION AT SER-37</scope>
</reference>
<reference key="6">
    <citation type="journal article" date="2011" name="Cell">
        <title>Identification of 67 histone marks and histone lysine crotonylation as a new type of histone modification.</title>
        <authorList>
            <person name="Tan M."/>
            <person name="Luo H."/>
            <person name="Lee S."/>
            <person name="Jin F."/>
            <person name="Yang J.S."/>
            <person name="Montellier E."/>
            <person name="Buchou T."/>
            <person name="Cheng Z."/>
            <person name="Rousseaux S."/>
            <person name="Rajagopal N."/>
            <person name="Lu Z."/>
            <person name="Ye Z."/>
            <person name="Zhu Q."/>
            <person name="Wysocka J."/>
            <person name="Ye Y."/>
            <person name="Khochbin S."/>
            <person name="Ren B."/>
            <person name="Zhao Y."/>
        </authorList>
    </citation>
    <scope>CROTONYLATION AT LYS-6; LYS-12; LYS-13; LYS-16; LYS-17; LYS-21; LYS-24 AND LYS-35</scope>
</reference>
<reference key="7">
    <citation type="journal article" date="2012" name="Mol. Cell. Proteomics">
        <title>Lysine succinylation and lysine malonylation in histones.</title>
        <authorList>
            <person name="Xie Z."/>
            <person name="Dai J."/>
            <person name="Dai L."/>
            <person name="Tan M."/>
            <person name="Cheng Z."/>
            <person name="Wu Y."/>
            <person name="Boeke J.D."/>
            <person name="Zhao Y."/>
        </authorList>
    </citation>
    <scope>SUCCINYLATION AT LYS-121</scope>
</reference>
<reference key="8">
    <citation type="journal article" date="2014" name="Nat. Chem. Biol.">
        <title>Lysine 2-hydroxyisobutyrylation is a widely distributed active histone mark.</title>
        <authorList>
            <person name="Dai L."/>
            <person name="Peng C."/>
            <person name="Montellier E."/>
            <person name="Lu Z."/>
            <person name="Chen Y."/>
            <person name="Ishii H."/>
            <person name="Debernardi A."/>
            <person name="Buchou T."/>
            <person name="Rousseaux S."/>
            <person name="Jin F."/>
            <person name="Sabari B.R."/>
            <person name="Deng Z."/>
            <person name="Allis C.D."/>
            <person name="Ren B."/>
            <person name="Khochbin S."/>
            <person name="Zhao Y."/>
        </authorList>
    </citation>
    <scope>HYDROXYBUTYRYLATION AT LYS-6; LYS-13; LYS-21; LYS-24; LYS-25; LYS-35; LYS-44; LYS-47; LYS-58; LYS-86; LYS-109; LYS-117 AND LYS-121</scope>
</reference>
<reference key="9">
    <citation type="journal article" date="2016" name="Mol. Cell">
        <title>Metabolic regulation of gene expression by histone lysine beta-hydroxybutyrylation.</title>
        <authorList>
            <person name="Xie Z."/>
            <person name="Zhang D."/>
            <person name="Chung D."/>
            <person name="Tang Z."/>
            <person name="Huang H."/>
            <person name="Dai L."/>
            <person name="Qi S."/>
            <person name="Li J."/>
            <person name="Colak G."/>
            <person name="Chen Y."/>
            <person name="Xia C."/>
            <person name="Peng C."/>
            <person name="Ruan H."/>
            <person name="Kirkey M."/>
            <person name="Wang D."/>
            <person name="Jensen L.M."/>
            <person name="Kwon O.K."/>
            <person name="Lee S."/>
            <person name="Pletcher S.D."/>
            <person name="Tan M."/>
            <person name="Lombard D.B."/>
            <person name="White K.P."/>
            <person name="Zhao H."/>
            <person name="Li J."/>
            <person name="Roeder R.G."/>
            <person name="Yang X."/>
            <person name="Zhao Y."/>
        </authorList>
    </citation>
    <scope>HYDROXYBUTYRYLATION AT LYS-6; LYS-12; LYS-21; LYS-35; LYS-109 AND LYS-117</scope>
</reference>
<reference key="10">
    <citation type="journal article" date="2019" name="Nature">
        <title>Metabolic regulation of gene expression by histone lactylation.</title>
        <authorList>
            <person name="Zhang D."/>
            <person name="Tang Z."/>
            <person name="Huang H."/>
            <person name="Zhou G."/>
            <person name="Cui C."/>
            <person name="Weng Y."/>
            <person name="Liu W."/>
            <person name="Kim S."/>
            <person name="Lee S."/>
            <person name="Perez-Neut M."/>
            <person name="Ding J."/>
            <person name="Czyz D."/>
            <person name="Hu R."/>
            <person name="Ye Z."/>
            <person name="He M."/>
            <person name="Zheng Y.G."/>
            <person name="Shuman H.A."/>
            <person name="Dai L."/>
            <person name="Ren B."/>
            <person name="Roeder R.G."/>
            <person name="Becker L."/>
            <person name="Zhao Y."/>
        </authorList>
    </citation>
    <scope>LACTYLATION AT LYS-6; LYS-12; LYS-16; LYS-17; LYS-21; LYS-86; LYS-109 AND LYS-117</scope>
</reference>
<reference key="11">
    <citation type="journal article" date="2020" name="Mol. Cell">
        <title>Functional interplay between histone H2B ADP-ribosylation and phosphorylation controls adipogenesis.</title>
        <authorList>
            <person name="Huang D."/>
            <person name="Camacho C.V."/>
            <person name="Setlem R."/>
            <person name="Ryu K.W."/>
            <person name="Parameswaran B."/>
            <person name="Gupta R.K."/>
            <person name="Kraus W.L."/>
        </authorList>
    </citation>
    <scope>ADP-RIBOSYLATION AT GLU-36</scope>
    <scope>PHOSPHORYLATION AT SER-37</scope>
</reference>
<keyword id="KW-0007">Acetylation</keyword>
<keyword id="KW-0013">ADP-ribosylation</keyword>
<keyword id="KW-0158">Chromosome</keyword>
<keyword id="KW-0238">DNA-binding</keyword>
<keyword id="KW-0325">Glycoprotein</keyword>
<keyword id="KW-0379">Hydroxylation</keyword>
<keyword id="KW-1017">Isopeptide bond</keyword>
<keyword id="KW-0488">Methylation</keyword>
<keyword id="KW-0544">Nucleosome core</keyword>
<keyword id="KW-0539">Nucleus</keyword>
<keyword id="KW-0597">Phosphoprotein</keyword>
<keyword id="KW-1185">Reference proteome</keyword>
<keyword id="KW-0832">Ubl conjugation</keyword>
<accession>Q8CGP1</accession>
<organism>
    <name type="scientific">Mus musculus</name>
    <name type="common">Mouse</name>
    <dbReference type="NCBI Taxonomy" id="10090"/>
    <lineage>
        <taxon>Eukaryota</taxon>
        <taxon>Metazoa</taxon>
        <taxon>Chordata</taxon>
        <taxon>Craniata</taxon>
        <taxon>Vertebrata</taxon>
        <taxon>Euteleostomi</taxon>
        <taxon>Mammalia</taxon>
        <taxon>Eutheria</taxon>
        <taxon>Euarchontoglires</taxon>
        <taxon>Glires</taxon>
        <taxon>Rodentia</taxon>
        <taxon>Myomorpha</taxon>
        <taxon>Muroidea</taxon>
        <taxon>Muridae</taxon>
        <taxon>Murinae</taxon>
        <taxon>Mus</taxon>
        <taxon>Mus</taxon>
    </lineage>
</organism>
<protein>
    <recommendedName>
        <fullName>Histone H2B type 1-K</fullName>
    </recommendedName>
</protein>
<evidence type="ECO:0000250" key="1">
    <source>
        <dbReference type="UniProtKB" id="O60814"/>
    </source>
</evidence>
<evidence type="ECO:0000250" key="2">
    <source>
        <dbReference type="UniProtKB" id="P23527"/>
    </source>
</evidence>
<evidence type="ECO:0000250" key="3">
    <source>
        <dbReference type="UniProtKB" id="P33778"/>
    </source>
</evidence>
<evidence type="ECO:0000250" key="4">
    <source>
        <dbReference type="UniProtKB" id="P58876"/>
    </source>
</evidence>
<evidence type="ECO:0000250" key="5">
    <source>
        <dbReference type="UniProtKB" id="P62807"/>
    </source>
</evidence>
<evidence type="ECO:0000250" key="6">
    <source>
        <dbReference type="UniProtKB" id="Q00729"/>
    </source>
</evidence>
<evidence type="ECO:0000250" key="7">
    <source>
        <dbReference type="UniProtKB" id="Q2M2T1"/>
    </source>
</evidence>
<evidence type="ECO:0000250" key="8">
    <source>
        <dbReference type="UniProtKB" id="Q5QNW6"/>
    </source>
</evidence>
<evidence type="ECO:0000250" key="9">
    <source>
        <dbReference type="UniProtKB" id="Q96A08"/>
    </source>
</evidence>
<evidence type="ECO:0000256" key="10">
    <source>
        <dbReference type="SAM" id="MobiDB-lite"/>
    </source>
</evidence>
<evidence type="ECO:0000269" key="11">
    <source>
    </source>
</evidence>
<evidence type="ECO:0000269" key="12">
    <source>
    </source>
</evidence>
<evidence type="ECO:0000269" key="13">
    <source>
    </source>
</evidence>
<evidence type="ECO:0000269" key="14">
    <source>
    </source>
</evidence>
<evidence type="ECO:0000269" key="15">
    <source>
    </source>
</evidence>
<evidence type="ECO:0000269" key="16">
    <source>
    </source>
</evidence>
<evidence type="ECO:0000269" key="17">
    <source>
    </source>
</evidence>
<evidence type="ECO:0000269" key="18">
    <source>
    </source>
</evidence>
<evidence type="ECO:0000269" key="19">
    <source>
    </source>
</evidence>
<evidence type="ECO:0000305" key="20"/>
<evidence type="ECO:0000312" key="21">
    <source>
        <dbReference type="MGI" id="MGI:2448399"/>
    </source>
</evidence>
<feature type="initiator methionine" description="Removed" evidence="2">
    <location>
        <position position="1"/>
    </location>
</feature>
<feature type="chain" id="PRO_0000244833" description="Histone H2B type 1-K">
    <location>
        <begin position="2"/>
        <end position="126"/>
    </location>
</feature>
<feature type="region of interest" description="Disordered" evidence="10">
    <location>
        <begin position="1"/>
        <end position="36"/>
    </location>
</feature>
<feature type="compositionally biased region" description="Low complexity" evidence="10">
    <location>
        <begin position="1"/>
        <end position="12"/>
    </location>
</feature>
<feature type="modified residue" description="N-acetylproline" evidence="2">
    <location>
        <position position="2"/>
    </location>
</feature>
<feature type="modified residue" description="ADP-ribosyl glutamic acid" evidence="3">
    <location>
        <position position="3"/>
    </location>
</feature>
<feature type="modified residue" description="N6-(2-hydroxyisobutyryl)lysine; alternate" evidence="16">
    <location>
        <position position="6"/>
    </location>
</feature>
<feature type="modified residue" description="N6-(beta-hydroxybutyryl)lysine; alternate" evidence="17">
    <location>
        <position position="6"/>
    </location>
</feature>
<feature type="modified residue" description="N6-acetyllysine; alternate" evidence="1">
    <location>
        <position position="6"/>
    </location>
</feature>
<feature type="modified residue" description="N6-butyryllysine; alternate" evidence="3">
    <location>
        <position position="6"/>
    </location>
</feature>
<feature type="modified residue" description="N6-crotonyllysine; alternate" evidence="14">
    <location>
        <position position="6"/>
    </location>
</feature>
<feature type="modified residue" description="N6-lactoyllysine; alternate" evidence="18">
    <location>
        <position position="6"/>
    </location>
</feature>
<feature type="modified residue" description="ADP-ribosylserine" evidence="3">
    <location>
        <position position="7"/>
    </location>
</feature>
<feature type="modified residue" description="N6-(beta-hydroxybutyryl)lysine; alternate" evidence="17">
    <location>
        <position position="12"/>
    </location>
</feature>
<feature type="modified residue" description="N6-acetyllysine; alternate" evidence="1">
    <location>
        <position position="12"/>
    </location>
</feature>
<feature type="modified residue" description="N6-crotonyllysine; alternate" evidence="14">
    <location>
        <position position="12"/>
    </location>
</feature>
<feature type="modified residue" description="N6-lactoyllysine; alternate" evidence="18">
    <location>
        <position position="12"/>
    </location>
</feature>
<feature type="modified residue" description="N6-(2-hydroxyisobutyryl)lysine; alternate" evidence="16">
    <location>
        <position position="13"/>
    </location>
</feature>
<feature type="modified residue" description="N6-acetyllysine; alternate" evidence="1">
    <location>
        <position position="13"/>
    </location>
</feature>
<feature type="modified residue" description="N6-crotonyllysine; alternate" evidence="14">
    <location>
        <position position="13"/>
    </location>
</feature>
<feature type="modified residue" description="Phosphoserine; by STK4/MST1" evidence="11 12">
    <location>
        <position position="15"/>
    </location>
</feature>
<feature type="modified residue" description="N6-acetyllysine; alternate" evidence="1">
    <location>
        <position position="16"/>
    </location>
</feature>
<feature type="modified residue" description="N6-crotonyllysine; alternate" evidence="14">
    <location>
        <position position="16"/>
    </location>
</feature>
<feature type="modified residue" description="N6-lactoyllysine; alternate" evidence="18">
    <location>
        <position position="16"/>
    </location>
</feature>
<feature type="modified residue" description="N6-acetyllysine; alternate" evidence="1">
    <location>
        <position position="17"/>
    </location>
</feature>
<feature type="modified residue" description="N6-crotonyllysine; alternate" evidence="14">
    <location>
        <position position="17"/>
    </location>
</feature>
<feature type="modified residue" description="N6-glutaryllysine; alternate" evidence="3">
    <location>
        <position position="17"/>
    </location>
</feature>
<feature type="modified residue" description="N6-lactoyllysine; alternate" evidence="18">
    <location>
        <position position="17"/>
    </location>
</feature>
<feature type="modified residue" description="N6-(2-hydroxyisobutyryl)lysine; alternate" evidence="16">
    <location>
        <position position="21"/>
    </location>
</feature>
<feature type="modified residue" description="N6-(beta-hydroxybutyryl)lysine; alternate" evidence="17">
    <location>
        <position position="21"/>
    </location>
</feature>
<feature type="modified residue" description="N6-acetyllysine; alternate" evidence="1">
    <location>
        <position position="21"/>
    </location>
</feature>
<feature type="modified residue" description="N6-butyryllysine; alternate" evidence="3">
    <location>
        <position position="21"/>
    </location>
</feature>
<feature type="modified residue" description="N6-crotonyllysine; alternate" evidence="14">
    <location>
        <position position="21"/>
    </location>
</feature>
<feature type="modified residue" description="N6-lactoyllysine; alternate" evidence="18">
    <location>
        <position position="21"/>
    </location>
</feature>
<feature type="modified residue" description="N6-(2-hydroxyisobutyryl)lysine; alternate" evidence="16">
    <location>
        <position position="24"/>
    </location>
</feature>
<feature type="modified residue" description="N6-acetyllysine; alternate" evidence="3">
    <location>
        <position position="24"/>
    </location>
</feature>
<feature type="modified residue" description="N6-crotonyllysine; alternate" evidence="14">
    <location>
        <position position="24"/>
    </location>
</feature>
<feature type="modified residue" description="N6-lactoyllysine; alternate" evidence="3">
    <location>
        <position position="24"/>
    </location>
</feature>
<feature type="modified residue" description="N6-(2-hydroxyisobutyryl)lysine" evidence="16">
    <location>
        <position position="25"/>
    </location>
</feature>
<feature type="modified residue" description="N6-(2-hydroxyisobutyryl)lysine; alternate" evidence="16">
    <location>
        <position position="35"/>
    </location>
</feature>
<feature type="modified residue" description="N6-(beta-hydroxybutyryl)lysine; alternate" evidence="17">
    <location>
        <position position="35"/>
    </location>
</feature>
<feature type="modified residue" description="N6-crotonyllysine; alternate" evidence="14">
    <location>
        <position position="35"/>
    </location>
</feature>
<feature type="modified residue" description="N6-glutaryllysine; alternate" evidence="3">
    <location>
        <position position="35"/>
    </location>
</feature>
<feature type="modified residue" description="N6-succinyllysine; alternate" evidence="1">
    <location>
        <position position="35"/>
    </location>
</feature>
<feature type="modified residue" description="PolyADP-ribosyl glutamic acid" evidence="19">
    <location>
        <position position="36"/>
    </location>
</feature>
<feature type="modified residue" description="Phosphoserine; by AMPK" evidence="13 19">
    <location>
        <position position="37"/>
    </location>
</feature>
<feature type="modified residue" description="N6-(2-hydroxyisobutyryl)lysine; alternate" evidence="16">
    <location>
        <position position="44"/>
    </location>
</feature>
<feature type="modified residue" description="N6-glutaryllysine; alternate" evidence="3">
    <location>
        <position position="44"/>
    </location>
</feature>
<feature type="modified residue" description="N6-lactoyllysine; alternate" evidence="3">
    <location>
        <position position="44"/>
    </location>
</feature>
<feature type="modified residue" description="N6-(2-hydroxyisobutyryl)lysine; alternate" evidence="16">
    <location>
        <position position="47"/>
    </location>
</feature>
<feature type="modified residue" description="N6-glutaryllysine; alternate" evidence="3">
    <location>
        <position position="47"/>
    </location>
</feature>
<feature type="modified residue" description="N6-methyllysine; alternate" evidence="1">
    <location>
        <position position="47"/>
    </location>
</feature>
<feature type="modified residue" description="N6,N6-dimethyllysine; alternate" evidence="1">
    <location>
        <position position="58"/>
    </location>
</feature>
<feature type="modified residue" description="N6-(2-hydroxyisobutyryl)lysine; alternate" evidence="16">
    <location>
        <position position="58"/>
    </location>
</feature>
<feature type="modified residue" description="Dimethylated arginine" evidence="9">
    <location>
        <position position="80"/>
    </location>
</feature>
<feature type="modified residue" description="N6,N6,N6-trimethyllysine; alternate" evidence="9">
    <location>
        <position position="86"/>
    </location>
</feature>
<feature type="modified residue" description="N6-(2-hydroxyisobutyryl)lysine; alternate" evidence="16">
    <location>
        <position position="86"/>
    </location>
</feature>
<feature type="modified residue" description="N6-acetyllysine; alternate" evidence="9">
    <location>
        <position position="86"/>
    </location>
</feature>
<feature type="modified residue" description="N6-lactoyllysine; alternate" evidence="18">
    <location>
        <position position="86"/>
    </location>
</feature>
<feature type="modified residue" description="Omega-N-methylarginine" evidence="9">
    <location>
        <position position="87"/>
    </location>
</feature>
<feature type="modified residue" description="Omega-N-methylarginine" evidence="9">
    <location>
        <position position="93"/>
    </location>
</feature>
<feature type="modified residue" description="N6-(2-hydroxyisobutyryl)lysine; alternate" evidence="16">
    <location>
        <position position="109"/>
    </location>
</feature>
<feature type="modified residue" description="N6-(beta-hydroxybutyryl)lysine; alternate" evidence="17">
    <location>
        <position position="109"/>
    </location>
</feature>
<feature type="modified residue" description="N6-glutaryllysine; alternate" evidence="3">
    <location>
        <position position="109"/>
    </location>
</feature>
<feature type="modified residue" description="N6-lactoyllysine; alternate" evidence="18">
    <location>
        <position position="109"/>
    </location>
</feature>
<feature type="modified residue" description="N6-methyllysine; alternate" evidence="1">
    <location>
        <position position="109"/>
    </location>
</feature>
<feature type="modified residue" description="Phosphothreonine" evidence="6">
    <location>
        <position position="116"/>
    </location>
</feature>
<feature type="modified residue" description="N6-(2-hydroxyisobutyryl)lysine; alternate" evidence="16">
    <location>
        <position position="117"/>
    </location>
</feature>
<feature type="modified residue" description="N6-(beta-hydroxybutyryl)lysine; alternate" evidence="17">
    <location>
        <position position="117"/>
    </location>
</feature>
<feature type="modified residue" description="N6-glutaryllysine; alternate" evidence="3">
    <location>
        <position position="117"/>
    </location>
</feature>
<feature type="modified residue" description="N6-lactoyllysine; alternate" evidence="18">
    <location>
        <position position="117"/>
    </location>
</feature>
<feature type="modified residue" description="N6-methylated lysine; alternate" evidence="6">
    <location>
        <position position="117"/>
    </location>
</feature>
<feature type="modified residue" description="N6-succinyllysine; alternate" evidence="1">
    <location>
        <position position="117"/>
    </location>
</feature>
<feature type="modified residue" description="N6-(2-hydroxyisobutyryl)lysine; alternate" evidence="16">
    <location>
        <position position="121"/>
    </location>
</feature>
<feature type="modified residue" description="N6-glutaryllysine; alternate" evidence="3">
    <location>
        <position position="121"/>
    </location>
</feature>
<feature type="modified residue" description="N6-lactoyllysine; alternate" evidence="3">
    <location>
        <position position="121"/>
    </location>
</feature>
<feature type="modified residue" description="N6-succinyllysine; alternate" evidence="15">
    <location>
        <position position="121"/>
    </location>
</feature>
<feature type="glycosylation site" description="O-linked (GlcNAc) serine" evidence="5">
    <location>
        <position position="113"/>
    </location>
</feature>
<feature type="cross-link" description="Glycyl lysine isopeptide (Lys-Gly) (interchain with G-Cter in SUMO2); alternate" evidence="4">
    <location>
        <position position="6"/>
    </location>
</feature>
<feature type="cross-link" description="Glycyl lysine isopeptide (Lys-Gly) (interchain with G-Cter in SUMO2); alternate" evidence="8">
    <location>
        <position position="21"/>
    </location>
</feature>
<feature type="cross-link" description="Glycyl lysine isopeptide (Lys-Gly) (interchain with G-Cter in ubiquitin); alternate" evidence="1">
    <location>
        <position position="35"/>
    </location>
</feature>
<feature type="cross-link" description="Glycyl lysine isopeptide (Lys-Gly) (interchain with G-Cter in ubiquitin); alternate" evidence="7">
    <location>
        <position position="121"/>
    </location>
</feature>
<dbReference type="EMBL" id="AY158931">
    <property type="protein sequence ID" value="AAO06241.1"/>
    <property type="molecule type" value="Genomic_DNA"/>
</dbReference>
<dbReference type="EMBL" id="AL590614">
    <property type="status" value="NOT_ANNOTATED_CDS"/>
    <property type="molecule type" value="Genomic_DNA"/>
</dbReference>
<dbReference type="CCDS" id="CCDS26305.1"/>
<dbReference type="RefSeq" id="NP_783596.1">
    <property type="nucleotide sequence ID" value="NM_175665.2"/>
</dbReference>
<dbReference type="SMR" id="Q8CGP1"/>
<dbReference type="BioGRID" id="235103">
    <property type="interactions" value="2"/>
</dbReference>
<dbReference type="FunCoup" id="Q8CGP1">
    <property type="interactions" value="1098"/>
</dbReference>
<dbReference type="STRING" id="10090.ENSMUSP00000106085"/>
<dbReference type="GlyCosmos" id="Q8CGP1">
    <property type="glycosylation" value="1 site, No reported glycans"/>
</dbReference>
<dbReference type="GlyGen" id="Q8CGP1">
    <property type="glycosylation" value="2 sites, 1 O-linked glycan (1 site)"/>
</dbReference>
<dbReference type="iPTMnet" id="Q8CGP1"/>
<dbReference type="PhosphoSitePlus" id="Q8CGP1"/>
<dbReference type="SwissPalm" id="Q8CGP1"/>
<dbReference type="jPOST" id="Q8CGP1"/>
<dbReference type="PaxDb" id="10090-ENSMUSP00000106085"/>
<dbReference type="Pumba" id="Q8CGP1"/>
<dbReference type="DNASU" id="319184"/>
<dbReference type="Ensembl" id="ENSMUST00000110455.4">
    <property type="protein sequence ID" value="ENSMUSP00000106085.3"/>
    <property type="gene ID" value="ENSMUSG00000062727.5"/>
</dbReference>
<dbReference type="GeneID" id="319184"/>
<dbReference type="KEGG" id="mmu:319184"/>
<dbReference type="UCSC" id="uc007psb.2">
    <property type="organism name" value="mouse"/>
</dbReference>
<dbReference type="AGR" id="MGI:2448399"/>
<dbReference type="CTD" id="85236"/>
<dbReference type="MGI" id="MGI:2448399">
    <property type="gene designation" value="H2bc12"/>
</dbReference>
<dbReference type="VEuPathDB" id="HostDB:ENSMUSG00000062727"/>
<dbReference type="eggNOG" id="KOG1744">
    <property type="taxonomic scope" value="Eukaryota"/>
</dbReference>
<dbReference type="GeneTree" id="ENSGT01110000267152"/>
<dbReference type="HOGENOM" id="CLU_075666_2_1_1"/>
<dbReference type="InParanoid" id="Q8CGP1"/>
<dbReference type="OMA" id="RLLLPGX"/>
<dbReference type="OrthoDB" id="9620091at2759"/>
<dbReference type="PhylomeDB" id="Q8CGP1"/>
<dbReference type="TreeFam" id="TF300212"/>
<dbReference type="Reactome" id="R-MMU-110330">
    <property type="pathway name" value="Recognition and association of DNA glycosylase with site containing an affected purine"/>
</dbReference>
<dbReference type="Reactome" id="R-MMU-110331">
    <property type="pathway name" value="Cleavage of the damaged purine"/>
</dbReference>
<dbReference type="Reactome" id="R-MMU-212300">
    <property type="pathway name" value="PRC2 methylates histones and DNA"/>
</dbReference>
<dbReference type="Reactome" id="R-MMU-2299718">
    <property type="pathway name" value="Condensation of Prophase Chromosomes"/>
</dbReference>
<dbReference type="Reactome" id="R-MMU-2559586">
    <property type="pathway name" value="DNA Damage/Telomere Stress Induced Senescence"/>
</dbReference>
<dbReference type="Reactome" id="R-MMU-3214815">
    <property type="pathway name" value="HDACs deacetylate histones"/>
</dbReference>
<dbReference type="Reactome" id="R-MMU-3214847">
    <property type="pathway name" value="HATs acetylate histones"/>
</dbReference>
<dbReference type="Reactome" id="R-MMU-5693565">
    <property type="pathway name" value="Recruitment and ATM-mediated phosphorylation of repair and signaling proteins at DNA double strand breaks"/>
</dbReference>
<dbReference type="Reactome" id="R-MMU-5693571">
    <property type="pathway name" value="Nonhomologous End-Joining (NHEJ)"/>
</dbReference>
<dbReference type="Reactome" id="R-MMU-5693607">
    <property type="pathway name" value="Processing of DNA double-strand break ends"/>
</dbReference>
<dbReference type="Reactome" id="R-MMU-606279">
    <property type="pathway name" value="Deposition of new CENPA-containing nucleosomes at the centromere"/>
</dbReference>
<dbReference type="Reactome" id="R-MMU-69473">
    <property type="pathway name" value="G2/M DNA damage checkpoint"/>
</dbReference>
<dbReference type="Reactome" id="R-MMU-8866654">
    <property type="pathway name" value="E3 ubiquitin ligases ubiquitinate target proteins"/>
</dbReference>
<dbReference type="Reactome" id="R-MMU-8936459">
    <property type="pathway name" value="RUNX1 regulates genes involved in megakaryocyte differentiation and platelet function"/>
</dbReference>
<dbReference type="Reactome" id="R-MMU-9018519">
    <property type="pathway name" value="Estrogen-dependent gene expression"/>
</dbReference>
<dbReference type="Reactome" id="R-MMU-9670095">
    <property type="pathway name" value="Inhibition of DNA recombination at telomere"/>
</dbReference>
<dbReference type="Reactome" id="R-MMU-9841922">
    <property type="pathway name" value="MLL4 and MLL3 complexes regulate expression of PPARG target genes in adipogenesis and hepatic steatosis"/>
</dbReference>
<dbReference type="Reactome" id="R-MMU-9843940">
    <property type="pathway name" value="Regulation of endogenous retroelements by KRAB-ZFP proteins"/>
</dbReference>
<dbReference type="BioGRID-ORCS" id="319184">
    <property type="hits" value="4 hits in 37 CRISPR screens"/>
</dbReference>
<dbReference type="PRO" id="PR:Q8CGP1"/>
<dbReference type="Proteomes" id="UP000000589">
    <property type="component" value="Chromosome 13"/>
</dbReference>
<dbReference type="RNAct" id="Q8CGP1">
    <property type="molecule type" value="protein"/>
</dbReference>
<dbReference type="Bgee" id="ENSMUSG00000062727">
    <property type="expression patterns" value="Expressed in uterus and 59 other cell types or tissues"/>
</dbReference>
<dbReference type="ExpressionAtlas" id="Q8CGP1">
    <property type="expression patterns" value="baseline and differential"/>
</dbReference>
<dbReference type="GO" id="GO:0005654">
    <property type="term" value="C:nucleoplasm"/>
    <property type="evidence" value="ECO:0000304"/>
    <property type="project" value="Reactome"/>
</dbReference>
<dbReference type="GO" id="GO:0000786">
    <property type="term" value="C:nucleosome"/>
    <property type="evidence" value="ECO:0007669"/>
    <property type="project" value="UniProtKB-KW"/>
</dbReference>
<dbReference type="GO" id="GO:0003677">
    <property type="term" value="F:DNA binding"/>
    <property type="evidence" value="ECO:0007669"/>
    <property type="project" value="UniProtKB-KW"/>
</dbReference>
<dbReference type="GO" id="GO:0046982">
    <property type="term" value="F:protein heterodimerization activity"/>
    <property type="evidence" value="ECO:0007669"/>
    <property type="project" value="InterPro"/>
</dbReference>
<dbReference type="GO" id="GO:0030527">
    <property type="term" value="F:structural constituent of chromatin"/>
    <property type="evidence" value="ECO:0007669"/>
    <property type="project" value="InterPro"/>
</dbReference>
<dbReference type="CDD" id="cd22910">
    <property type="entry name" value="HFD_H2B"/>
    <property type="match status" value="1"/>
</dbReference>
<dbReference type="FunFam" id="1.10.20.10:FF:000003">
    <property type="entry name" value="Histone H2B"/>
    <property type="match status" value="1"/>
</dbReference>
<dbReference type="Gene3D" id="1.10.20.10">
    <property type="entry name" value="Histone, subunit A"/>
    <property type="match status" value="1"/>
</dbReference>
<dbReference type="InterPro" id="IPR009072">
    <property type="entry name" value="Histone-fold"/>
</dbReference>
<dbReference type="InterPro" id="IPR007125">
    <property type="entry name" value="Histone_H2A/H2B/H3"/>
</dbReference>
<dbReference type="InterPro" id="IPR000558">
    <property type="entry name" value="Histone_H2B"/>
</dbReference>
<dbReference type="InterPro" id="IPR055333">
    <property type="entry name" value="HISTONE_H2B_site"/>
</dbReference>
<dbReference type="PANTHER" id="PTHR23428">
    <property type="entry name" value="HISTONE H2B"/>
    <property type="match status" value="1"/>
</dbReference>
<dbReference type="Pfam" id="PF00125">
    <property type="entry name" value="Histone"/>
    <property type="match status" value="1"/>
</dbReference>
<dbReference type="PRINTS" id="PR00621">
    <property type="entry name" value="HISTONEH2B"/>
</dbReference>
<dbReference type="SMART" id="SM00427">
    <property type="entry name" value="H2B"/>
    <property type="match status" value="1"/>
</dbReference>
<dbReference type="SUPFAM" id="SSF47113">
    <property type="entry name" value="Histone-fold"/>
    <property type="match status" value="1"/>
</dbReference>
<dbReference type="PROSITE" id="PS00357">
    <property type="entry name" value="HISTONE_H2B"/>
    <property type="match status" value="1"/>
</dbReference>
<proteinExistence type="evidence at protein level"/>